<dbReference type="EMBL" id="CP000241">
    <property type="protein sequence ID" value="ABF85155.1"/>
    <property type="status" value="ALT_INIT"/>
    <property type="molecule type" value="Genomic_DNA"/>
</dbReference>
<dbReference type="RefSeq" id="WP_000254279.1">
    <property type="nucleotide sequence ID" value="NC_008086.1"/>
</dbReference>
<dbReference type="SMR" id="Q1CSB7"/>
<dbReference type="KEGG" id="hpa:HPAG1_1088"/>
<dbReference type="HOGENOM" id="CLU_077636_2_0_7"/>
<dbReference type="GO" id="GO:0005737">
    <property type="term" value="C:cytoplasm"/>
    <property type="evidence" value="ECO:0007669"/>
    <property type="project" value="UniProtKB-SubCell"/>
</dbReference>
<dbReference type="GO" id="GO:0005840">
    <property type="term" value="C:ribosome"/>
    <property type="evidence" value="ECO:0007669"/>
    <property type="project" value="InterPro"/>
</dbReference>
<dbReference type="GO" id="GO:0043022">
    <property type="term" value="F:ribosome binding"/>
    <property type="evidence" value="ECO:0007669"/>
    <property type="project" value="InterPro"/>
</dbReference>
<dbReference type="GO" id="GO:0042274">
    <property type="term" value="P:ribosomal small subunit biogenesis"/>
    <property type="evidence" value="ECO:0007669"/>
    <property type="project" value="UniProtKB-UniRule"/>
</dbReference>
<dbReference type="GO" id="GO:0006364">
    <property type="term" value="P:rRNA processing"/>
    <property type="evidence" value="ECO:0007669"/>
    <property type="project" value="UniProtKB-UniRule"/>
</dbReference>
<dbReference type="Gene3D" id="2.30.30.240">
    <property type="entry name" value="PRC-barrel domain"/>
    <property type="match status" value="1"/>
</dbReference>
<dbReference type="Gene3D" id="2.40.30.60">
    <property type="entry name" value="RimM"/>
    <property type="match status" value="1"/>
</dbReference>
<dbReference type="HAMAP" id="MF_00014">
    <property type="entry name" value="Ribosome_mat_RimM"/>
    <property type="match status" value="1"/>
</dbReference>
<dbReference type="InterPro" id="IPR027275">
    <property type="entry name" value="PRC-brl_dom"/>
</dbReference>
<dbReference type="InterPro" id="IPR011033">
    <property type="entry name" value="PRC_barrel-like_sf"/>
</dbReference>
<dbReference type="InterPro" id="IPR011961">
    <property type="entry name" value="RimM"/>
</dbReference>
<dbReference type="InterPro" id="IPR002676">
    <property type="entry name" value="RimM_N"/>
</dbReference>
<dbReference type="InterPro" id="IPR036976">
    <property type="entry name" value="RimM_N_sf"/>
</dbReference>
<dbReference type="InterPro" id="IPR009000">
    <property type="entry name" value="Transl_B-barrel_sf"/>
</dbReference>
<dbReference type="NCBIfam" id="TIGR02273">
    <property type="entry name" value="16S_RimM"/>
    <property type="match status" value="1"/>
</dbReference>
<dbReference type="PANTHER" id="PTHR33692">
    <property type="entry name" value="RIBOSOME MATURATION FACTOR RIMM"/>
    <property type="match status" value="1"/>
</dbReference>
<dbReference type="PANTHER" id="PTHR33692:SF1">
    <property type="entry name" value="RIBOSOME MATURATION FACTOR RIMM"/>
    <property type="match status" value="1"/>
</dbReference>
<dbReference type="Pfam" id="PF05239">
    <property type="entry name" value="PRC"/>
    <property type="match status" value="1"/>
</dbReference>
<dbReference type="Pfam" id="PF01782">
    <property type="entry name" value="RimM"/>
    <property type="match status" value="1"/>
</dbReference>
<dbReference type="SUPFAM" id="SSF50346">
    <property type="entry name" value="PRC-barrel domain"/>
    <property type="match status" value="1"/>
</dbReference>
<dbReference type="SUPFAM" id="SSF50447">
    <property type="entry name" value="Translation proteins"/>
    <property type="match status" value="1"/>
</dbReference>
<reference key="1">
    <citation type="journal article" date="2006" name="Proc. Natl. Acad. Sci. U.S.A.">
        <title>The complete genome sequence of a chronic atrophic gastritis Helicobacter pylori strain: evolution during disease progression.</title>
        <authorList>
            <person name="Oh J.D."/>
            <person name="Kling-Baeckhed H."/>
            <person name="Giannakis M."/>
            <person name="Xu J."/>
            <person name="Fulton R.S."/>
            <person name="Fulton L.A."/>
            <person name="Cordum H.S."/>
            <person name="Wang C."/>
            <person name="Elliott G."/>
            <person name="Edwards J."/>
            <person name="Mardis E.R."/>
            <person name="Engstrand L.G."/>
            <person name="Gordon J.I."/>
        </authorList>
    </citation>
    <scope>NUCLEOTIDE SEQUENCE [LARGE SCALE GENOMIC DNA]</scope>
    <source>
        <strain>HPAG1</strain>
    </source>
</reference>
<comment type="function">
    <text evidence="1">An accessory protein needed during the final step in the assembly of 30S ribosomal subunit, possibly for assembly of the head region. Essential for efficient processing of 16S rRNA. May be needed both before and after RbfA during the maturation of 16S rRNA. It has affinity for free ribosomal 30S subunits but not for 70S ribosomes.</text>
</comment>
<comment type="subunit">
    <text evidence="1">Binds ribosomal protein uS19.</text>
</comment>
<comment type="subcellular location">
    <subcellularLocation>
        <location evidence="1">Cytoplasm</location>
    </subcellularLocation>
</comment>
<comment type="domain">
    <text evidence="1">The PRC barrel domain binds ribosomal protein uS19.</text>
</comment>
<comment type="similarity">
    <text evidence="1">Belongs to the RimM family.</text>
</comment>
<comment type="sequence caution" evidence="2">
    <conflict type="erroneous initiation">
        <sequence resource="EMBL-CDS" id="ABF85155"/>
    </conflict>
</comment>
<protein>
    <recommendedName>
        <fullName evidence="1">Ribosome maturation factor RimM</fullName>
    </recommendedName>
</protein>
<organism>
    <name type="scientific">Helicobacter pylori (strain HPAG1)</name>
    <dbReference type="NCBI Taxonomy" id="357544"/>
    <lineage>
        <taxon>Bacteria</taxon>
        <taxon>Pseudomonadati</taxon>
        <taxon>Campylobacterota</taxon>
        <taxon>Epsilonproteobacteria</taxon>
        <taxon>Campylobacterales</taxon>
        <taxon>Helicobacteraceae</taxon>
        <taxon>Helicobacter</taxon>
    </lineage>
</organism>
<gene>
    <name evidence="1" type="primary">rimM</name>
    <name type="ordered locus">HPAG1_1088</name>
</gene>
<evidence type="ECO:0000255" key="1">
    <source>
        <dbReference type="HAMAP-Rule" id="MF_00014"/>
    </source>
</evidence>
<evidence type="ECO:0000305" key="2"/>
<keyword id="KW-0143">Chaperone</keyword>
<keyword id="KW-0963">Cytoplasm</keyword>
<keyword id="KW-0690">Ribosome biogenesis</keyword>
<keyword id="KW-0698">rRNA processing</keyword>
<name>RIMM_HELPH</name>
<proteinExistence type="inferred from homology"/>
<feature type="chain" id="PRO_0000321732" description="Ribosome maturation factor RimM">
    <location>
        <begin position="1"/>
        <end position="181"/>
    </location>
</feature>
<feature type="domain" description="PRC barrel" evidence="1">
    <location>
        <begin position="98"/>
        <end position="177"/>
    </location>
</feature>
<sequence length="181" mass="20487">MLLVGRIGKSVGLNGGLKLHLESDFPECLKKGVKVSVAPINAFSRASSFKDYVIHSYEHAKNLLFLETIHTPEKAKELTNLGLFMSEAESKKLCVLKEGEFFYCDLVGLSVVEENEFLGKVIEIQRISQIDYFLVETTKSLVEKGLAKIFLIPYRDFYIQEILLQDKKITTHNAKTLLENS</sequence>
<accession>Q1CSB7</accession>